<name>RECO_STRP3</name>
<keyword id="KW-0227">DNA damage</keyword>
<keyword id="KW-0233">DNA recombination</keyword>
<keyword id="KW-0234">DNA repair</keyword>
<reference key="1">
    <citation type="journal article" date="2002" name="Proc. Natl. Acad. Sci. U.S.A.">
        <title>Genome sequence of a serotype M3 strain of group A Streptococcus: phage-encoded toxins, the high-virulence phenotype, and clone emergence.</title>
        <authorList>
            <person name="Beres S.B."/>
            <person name="Sylva G.L."/>
            <person name="Barbian K.D."/>
            <person name="Lei B."/>
            <person name="Hoff J.S."/>
            <person name="Mammarella N.D."/>
            <person name="Liu M.-Y."/>
            <person name="Smoot J.C."/>
            <person name="Porcella S.F."/>
            <person name="Parkins L.D."/>
            <person name="Campbell D.S."/>
            <person name="Smith T.M."/>
            <person name="McCormick J.K."/>
            <person name="Leung D.Y.M."/>
            <person name="Schlievert P.M."/>
            <person name="Musser J.M."/>
        </authorList>
    </citation>
    <scope>NUCLEOTIDE SEQUENCE [LARGE SCALE GENOMIC DNA]</scope>
    <source>
        <strain>ATCC BAA-595 / MGAS315</strain>
    </source>
</reference>
<evidence type="ECO:0000250" key="1"/>
<evidence type="ECO:0000305" key="2"/>
<feature type="chain" id="PRO_0000205012" description="DNA repair protein RecO">
    <location>
        <begin position="1"/>
        <end position="251"/>
    </location>
</feature>
<gene>
    <name type="primary">recO</name>
    <name type="ordered locus">SpyM3_0016</name>
</gene>
<comment type="function">
    <text evidence="1">Involved in DNA repair and RecF pathway recombination.</text>
</comment>
<comment type="similarity">
    <text evidence="2">Belongs to the RecO family.</text>
</comment>
<comment type="sequence caution" evidence="2">
    <conflict type="erroneous initiation">
        <sequence resource="EMBL-CDS" id="AAM78623"/>
    </conflict>
</comment>
<organism>
    <name type="scientific">Streptococcus pyogenes serotype M3 (strain ATCC BAA-595 / MGAS315)</name>
    <dbReference type="NCBI Taxonomy" id="198466"/>
    <lineage>
        <taxon>Bacteria</taxon>
        <taxon>Bacillati</taxon>
        <taxon>Bacillota</taxon>
        <taxon>Bacilli</taxon>
        <taxon>Lactobacillales</taxon>
        <taxon>Streptococcaceae</taxon>
        <taxon>Streptococcus</taxon>
    </lineage>
</organism>
<accession>P0DD86</accession>
<accession>P65988</accession>
<accession>Q9A1Z6</accession>
<dbReference type="EMBL" id="AE014074">
    <property type="protein sequence ID" value="AAM78623.1"/>
    <property type="status" value="ALT_INIT"/>
    <property type="molecule type" value="Genomic_DNA"/>
</dbReference>
<dbReference type="RefSeq" id="WP_002986719.1">
    <property type="nucleotide sequence ID" value="NC_004070.1"/>
</dbReference>
<dbReference type="SMR" id="P0DD86"/>
<dbReference type="GeneID" id="69900002"/>
<dbReference type="KEGG" id="spg:SpyM3_0016"/>
<dbReference type="HOGENOM" id="CLU_066632_4_0_9"/>
<dbReference type="Proteomes" id="UP000000564">
    <property type="component" value="Chromosome"/>
</dbReference>
<dbReference type="GO" id="GO:0043590">
    <property type="term" value="C:bacterial nucleoid"/>
    <property type="evidence" value="ECO:0007669"/>
    <property type="project" value="TreeGrafter"/>
</dbReference>
<dbReference type="GO" id="GO:0006310">
    <property type="term" value="P:DNA recombination"/>
    <property type="evidence" value="ECO:0007669"/>
    <property type="project" value="UniProtKB-UniRule"/>
</dbReference>
<dbReference type="GO" id="GO:0006302">
    <property type="term" value="P:double-strand break repair"/>
    <property type="evidence" value="ECO:0007669"/>
    <property type="project" value="TreeGrafter"/>
</dbReference>
<dbReference type="Gene3D" id="2.40.50.140">
    <property type="entry name" value="Nucleic acid-binding proteins"/>
    <property type="match status" value="1"/>
</dbReference>
<dbReference type="Gene3D" id="1.20.1440.120">
    <property type="entry name" value="Recombination protein O, C-terminal domain"/>
    <property type="match status" value="1"/>
</dbReference>
<dbReference type="HAMAP" id="MF_00201">
    <property type="entry name" value="RecO"/>
    <property type="match status" value="1"/>
</dbReference>
<dbReference type="InterPro" id="IPR037278">
    <property type="entry name" value="ARFGAP/RecO"/>
</dbReference>
<dbReference type="InterPro" id="IPR022572">
    <property type="entry name" value="DNA_rep/recomb_RecO_N"/>
</dbReference>
<dbReference type="InterPro" id="IPR012340">
    <property type="entry name" value="NA-bd_OB-fold"/>
</dbReference>
<dbReference type="InterPro" id="IPR003717">
    <property type="entry name" value="RecO"/>
</dbReference>
<dbReference type="InterPro" id="IPR042242">
    <property type="entry name" value="RecO_C"/>
</dbReference>
<dbReference type="NCBIfam" id="TIGR00613">
    <property type="entry name" value="reco"/>
    <property type="match status" value="1"/>
</dbReference>
<dbReference type="PANTHER" id="PTHR33991">
    <property type="entry name" value="DNA REPAIR PROTEIN RECO"/>
    <property type="match status" value="1"/>
</dbReference>
<dbReference type="PANTHER" id="PTHR33991:SF1">
    <property type="entry name" value="DNA REPAIR PROTEIN RECO"/>
    <property type="match status" value="1"/>
</dbReference>
<dbReference type="Pfam" id="PF02565">
    <property type="entry name" value="RecO_C"/>
    <property type="match status" value="1"/>
</dbReference>
<dbReference type="Pfam" id="PF11967">
    <property type="entry name" value="RecO_N"/>
    <property type="match status" value="1"/>
</dbReference>
<dbReference type="SUPFAM" id="SSF57863">
    <property type="entry name" value="ArfGap/RecO-like zinc finger"/>
    <property type="match status" value="1"/>
</dbReference>
<dbReference type="SUPFAM" id="SSF50249">
    <property type="entry name" value="Nucleic acid-binding proteins"/>
    <property type="match status" value="1"/>
</dbReference>
<protein>
    <recommendedName>
        <fullName>DNA repair protein RecO</fullName>
    </recommendedName>
    <alternativeName>
        <fullName>Recombination protein O</fullName>
    </alternativeName>
</protein>
<sequence length="251" mass="29517">MQLTESLGIVLFNRNYREDDKLVKIFTEVAGKQMFFVKHISRSKMSSIIQPLTIADFIFKLNDTGLSYVVDYSNVNTYRYINNDIFRLAYASYVLALADAAIADNESDSHLFTFLKKTLDLMEEGLDYEILTNIFEIQILDRFGISLNFHECAICHRTDLPLDFSHRFSAVLCSEHYYKDNRRNHLDPNVIYLLSRFQKITFDDLRTISLNKDIKKKLRQFIDELYHDYVGIKLKSKTFIDNLVKWGDIMK</sequence>
<proteinExistence type="inferred from homology"/>